<sequence length="165" mass="18117">MSGILTRWRQLGRRYFWPHLLLGMVAASFGLPALSNAAETNTPARTTASTASKVNFSHLALLEASNRRPNFTVDYWHQHAIRTVIRHLSFAMAPQTLPVADAPSPLQAHHIALLNTLSAMLTQEGTPPAIVRRLSLAYFAPQTAFSIPAWISQAQGIRAGPQRLS</sequence>
<evidence type="ECO:0000255" key="1">
    <source>
        <dbReference type="HAMAP-Rule" id="MF_01332"/>
    </source>
</evidence>
<comment type="function">
    <text evidence="1">Regulates secA expression by translational coupling of the secM secA operon. Translational pausing at a specific Pro residue 5 residues before the end of the protein may allow disruption of a mRNA repressor helix that normally suppresses secA translation initiation.</text>
</comment>
<comment type="subcellular location">
    <subcellularLocation>
        <location evidence="1">Cytoplasm</location>
        <location evidence="1">Cytosol</location>
    </subcellularLocation>
    <subcellularLocation>
        <location evidence="1">Periplasm</location>
    </subcellularLocation>
    <text evidence="1">The active form is cytosolic, while the periplasmic form is rapidly degraded, mainly by the tail-specific protease.</text>
</comment>
<comment type="similarity">
    <text evidence="1">Belongs to the SecM family.</text>
</comment>
<accession>Q57TC3</accession>
<keyword id="KW-0963">Cytoplasm</keyword>
<keyword id="KW-0574">Periplasm</keyword>
<keyword id="KW-0732">Signal</keyword>
<reference key="1">
    <citation type="journal article" date="2005" name="Nucleic Acids Res.">
        <title>The genome sequence of Salmonella enterica serovar Choleraesuis, a highly invasive and resistant zoonotic pathogen.</title>
        <authorList>
            <person name="Chiu C.-H."/>
            <person name="Tang P."/>
            <person name="Chu C."/>
            <person name="Hu S."/>
            <person name="Bao Q."/>
            <person name="Yu J."/>
            <person name="Chou Y.-Y."/>
            <person name="Wang H.-S."/>
            <person name="Lee Y.-S."/>
        </authorList>
    </citation>
    <scope>NUCLEOTIDE SEQUENCE [LARGE SCALE GENOMIC DNA]</scope>
    <source>
        <strain>SC-B67</strain>
    </source>
</reference>
<proteinExistence type="inferred from homology"/>
<gene>
    <name evidence="1" type="primary">secM</name>
    <name type="ordered locus">SCH_0132</name>
</gene>
<protein>
    <recommendedName>
        <fullName evidence="1">Secretion monitor</fullName>
    </recommendedName>
</protein>
<dbReference type="EMBL" id="AE017220">
    <property type="protein sequence ID" value="AAX64038.1"/>
    <property type="molecule type" value="Genomic_DNA"/>
</dbReference>
<dbReference type="RefSeq" id="WP_000014336.1">
    <property type="nucleotide sequence ID" value="NC_006905.1"/>
</dbReference>
<dbReference type="SMR" id="Q57TC3"/>
<dbReference type="KEGG" id="sec:SCH_0132"/>
<dbReference type="HOGENOM" id="CLU_108853_0_0_6"/>
<dbReference type="Proteomes" id="UP000000538">
    <property type="component" value="Chromosome"/>
</dbReference>
<dbReference type="GO" id="GO:0005829">
    <property type="term" value="C:cytosol"/>
    <property type="evidence" value="ECO:0007669"/>
    <property type="project" value="UniProtKB-SubCell"/>
</dbReference>
<dbReference type="GO" id="GO:0042597">
    <property type="term" value="C:periplasmic space"/>
    <property type="evidence" value="ECO:0007669"/>
    <property type="project" value="UniProtKB-SubCell"/>
</dbReference>
<dbReference type="GO" id="GO:0045182">
    <property type="term" value="F:translation regulator activity"/>
    <property type="evidence" value="ECO:0007669"/>
    <property type="project" value="InterPro"/>
</dbReference>
<dbReference type="HAMAP" id="MF_01332">
    <property type="entry name" value="SecM"/>
    <property type="match status" value="1"/>
</dbReference>
<dbReference type="InterPro" id="IPR009502">
    <property type="entry name" value="SecM"/>
</dbReference>
<dbReference type="NCBIfam" id="NF002799">
    <property type="entry name" value="PRK02943.1-1"/>
    <property type="match status" value="1"/>
</dbReference>
<dbReference type="Pfam" id="PF06558">
    <property type="entry name" value="SecM"/>
    <property type="match status" value="1"/>
</dbReference>
<dbReference type="PIRSF" id="PIRSF004572">
    <property type="entry name" value="SecM"/>
    <property type="match status" value="1"/>
</dbReference>
<organism>
    <name type="scientific">Salmonella choleraesuis (strain SC-B67)</name>
    <dbReference type="NCBI Taxonomy" id="321314"/>
    <lineage>
        <taxon>Bacteria</taxon>
        <taxon>Pseudomonadati</taxon>
        <taxon>Pseudomonadota</taxon>
        <taxon>Gammaproteobacteria</taxon>
        <taxon>Enterobacterales</taxon>
        <taxon>Enterobacteriaceae</taxon>
        <taxon>Salmonella</taxon>
    </lineage>
</organism>
<feature type="signal peptide" evidence="1">
    <location>
        <begin position="1"/>
        <end position="37"/>
    </location>
</feature>
<feature type="chain" id="PRO_0000042109" description="Secretion monitor">
    <location>
        <begin position="38"/>
        <end position="165"/>
    </location>
</feature>
<name>SECM_SALCH</name>